<comment type="function">
    <text evidence="1">Catalyzes the conversion of (8S)-3',8-cyclo-7,8-dihydroguanosine 5'-triphosphate to cyclic pyranopterin monophosphate (cPMP).</text>
</comment>
<comment type="catalytic activity">
    <reaction evidence="1">
        <text>(8S)-3',8-cyclo-7,8-dihydroguanosine 5'-triphosphate = cyclic pyranopterin phosphate + diphosphate</text>
        <dbReference type="Rhea" id="RHEA:49580"/>
        <dbReference type="ChEBI" id="CHEBI:33019"/>
        <dbReference type="ChEBI" id="CHEBI:59648"/>
        <dbReference type="ChEBI" id="CHEBI:131766"/>
        <dbReference type="EC" id="4.6.1.17"/>
    </reaction>
</comment>
<comment type="pathway">
    <text>Cofactor biosynthesis; molybdopterin biosynthesis.</text>
</comment>
<comment type="subunit">
    <text evidence="3">Homohexamer.</text>
</comment>
<comment type="subcellular location">
    <subcellularLocation>
        <location evidence="3">Mitochondrion matrix</location>
    </subcellularLocation>
</comment>
<comment type="tissue specificity">
    <text>Abundantly expressed in the roots.</text>
</comment>
<comment type="similarity">
    <text evidence="4">Belongs to the MoaC family.</text>
</comment>
<organism>
    <name type="scientific">Arabidopsis thaliana</name>
    <name type="common">Mouse-ear cress</name>
    <dbReference type="NCBI Taxonomy" id="3702"/>
    <lineage>
        <taxon>Eukaryota</taxon>
        <taxon>Viridiplantae</taxon>
        <taxon>Streptophyta</taxon>
        <taxon>Embryophyta</taxon>
        <taxon>Tracheophyta</taxon>
        <taxon>Spermatophyta</taxon>
        <taxon>Magnoliopsida</taxon>
        <taxon>eudicotyledons</taxon>
        <taxon>Gunneridae</taxon>
        <taxon>Pentapetalae</taxon>
        <taxon>rosids</taxon>
        <taxon>malvids</taxon>
        <taxon>Brassicales</taxon>
        <taxon>Brassicaceae</taxon>
        <taxon>Camelineae</taxon>
        <taxon>Arabidopsis</taxon>
    </lineage>
</organism>
<protein>
    <recommendedName>
        <fullName>Cyclic pyranopterin monophosphate synthase, mitochondrial</fullName>
        <ecNumber evidence="1">4.6.1.17</ecNumber>
    </recommendedName>
    <alternativeName>
        <fullName>Molybdenum cofactor biosynthesis enzyme CNX3</fullName>
    </alternativeName>
    <alternativeName>
        <fullName>Molybdenum cofactor biosynthesis protein C</fullName>
    </alternativeName>
    <alternativeName>
        <fullName>Molybdopterin biosynthesis protein CNX3</fullName>
    </alternativeName>
</protein>
<reference key="1">
    <citation type="journal article" date="1995" name="J. Biol. Chem.">
        <title>Isolation of two Arabidopsis cDNAs involved in early steps of molybdenum cofactor biosynthesis by functional complementation of Escherichia coli mutants.</title>
        <authorList>
            <person name="Hoff T."/>
            <person name="Schnorr K.M."/>
            <person name="Meyer C."/>
            <person name="Caboche M."/>
        </authorList>
    </citation>
    <scope>NUCLEOTIDE SEQUENCE [MRNA]</scope>
    <source>
        <strain>cv. Columbia</strain>
    </source>
</reference>
<reference key="2">
    <citation type="journal article" date="2000" name="Nature">
        <title>Sequence and analysis of chromosome 1 of the plant Arabidopsis thaliana.</title>
        <authorList>
            <person name="Theologis A."/>
            <person name="Ecker J.R."/>
            <person name="Palm C.J."/>
            <person name="Federspiel N.A."/>
            <person name="Kaul S."/>
            <person name="White O."/>
            <person name="Alonso J."/>
            <person name="Altafi H."/>
            <person name="Araujo R."/>
            <person name="Bowman C.L."/>
            <person name="Brooks S.Y."/>
            <person name="Buehler E."/>
            <person name="Chan A."/>
            <person name="Chao Q."/>
            <person name="Chen H."/>
            <person name="Cheuk R.F."/>
            <person name="Chin C.W."/>
            <person name="Chung M.K."/>
            <person name="Conn L."/>
            <person name="Conway A.B."/>
            <person name="Conway A.R."/>
            <person name="Creasy T.H."/>
            <person name="Dewar K."/>
            <person name="Dunn P."/>
            <person name="Etgu P."/>
            <person name="Feldblyum T.V."/>
            <person name="Feng J.-D."/>
            <person name="Fong B."/>
            <person name="Fujii C.Y."/>
            <person name="Gill J.E."/>
            <person name="Goldsmith A.D."/>
            <person name="Haas B."/>
            <person name="Hansen N.F."/>
            <person name="Hughes B."/>
            <person name="Huizar L."/>
            <person name="Hunter J.L."/>
            <person name="Jenkins J."/>
            <person name="Johnson-Hopson C."/>
            <person name="Khan S."/>
            <person name="Khaykin E."/>
            <person name="Kim C.J."/>
            <person name="Koo H.L."/>
            <person name="Kremenetskaia I."/>
            <person name="Kurtz D.B."/>
            <person name="Kwan A."/>
            <person name="Lam B."/>
            <person name="Langin-Hooper S."/>
            <person name="Lee A."/>
            <person name="Lee J.M."/>
            <person name="Lenz C.A."/>
            <person name="Li J.H."/>
            <person name="Li Y.-P."/>
            <person name="Lin X."/>
            <person name="Liu S.X."/>
            <person name="Liu Z.A."/>
            <person name="Luros J.S."/>
            <person name="Maiti R."/>
            <person name="Marziali A."/>
            <person name="Militscher J."/>
            <person name="Miranda M."/>
            <person name="Nguyen M."/>
            <person name="Nierman W.C."/>
            <person name="Osborne B.I."/>
            <person name="Pai G."/>
            <person name="Peterson J."/>
            <person name="Pham P.K."/>
            <person name="Rizzo M."/>
            <person name="Rooney T."/>
            <person name="Rowley D."/>
            <person name="Sakano H."/>
            <person name="Salzberg S.L."/>
            <person name="Schwartz J.R."/>
            <person name="Shinn P."/>
            <person name="Southwick A.M."/>
            <person name="Sun H."/>
            <person name="Tallon L.J."/>
            <person name="Tambunga G."/>
            <person name="Toriumi M.J."/>
            <person name="Town C.D."/>
            <person name="Utterback T."/>
            <person name="Van Aken S."/>
            <person name="Vaysberg M."/>
            <person name="Vysotskaia V.S."/>
            <person name="Walker M."/>
            <person name="Wu D."/>
            <person name="Yu G."/>
            <person name="Fraser C.M."/>
            <person name="Venter J.C."/>
            <person name="Davis R.W."/>
        </authorList>
    </citation>
    <scope>NUCLEOTIDE SEQUENCE [LARGE SCALE GENOMIC DNA]</scope>
    <source>
        <strain>cv. Columbia</strain>
    </source>
</reference>
<reference key="3">
    <citation type="journal article" date="2017" name="Plant J.">
        <title>Araport11: a complete reannotation of the Arabidopsis thaliana reference genome.</title>
        <authorList>
            <person name="Cheng C.Y."/>
            <person name="Krishnakumar V."/>
            <person name="Chan A.P."/>
            <person name="Thibaud-Nissen F."/>
            <person name="Schobel S."/>
            <person name="Town C.D."/>
        </authorList>
    </citation>
    <scope>GENOME REANNOTATION</scope>
    <source>
        <strain>cv. Columbia</strain>
    </source>
</reference>
<reference key="4">
    <citation type="submission" date="2006-06" db="EMBL/GenBank/DDBJ databases">
        <title>Arabidopsis ORF clones.</title>
        <authorList>
            <person name="Shinn P."/>
            <person name="Chen H."/>
            <person name="Kim C.J."/>
            <person name="Quinitio C."/>
            <person name="Ecker J.R."/>
        </authorList>
    </citation>
    <scope>NUCLEOTIDE SEQUENCE [LARGE SCALE MRNA]</scope>
</reference>
<reference key="5">
    <citation type="journal article" date="2010" name="Plant Cell">
        <title>A novel role for Arabidopsis mitochondrial ABC transporter ATM3 in molybdenum cofactor biosynthesis.</title>
        <authorList>
            <person name="Teschner J."/>
            <person name="Lachmann N."/>
            <person name="Schulze J."/>
            <person name="Geisler M."/>
            <person name="Selbach K."/>
            <person name="Santamaria-Araujo J."/>
            <person name="Balk J."/>
            <person name="Mendel R.R."/>
            <person name="Bittner F."/>
        </authorList>
    </citation>
    <scope>SUBCELLULAR LOCATION</scope>
    <scope>SUBUNIT</scope>
</reference>
<gene>
    <name type="primary">CNX3</name>
    <name type="ordered locus">At1g01290</name>
    <name type="ORF">F6F3.9</name>
</gene>
<proteinExistence type="evidence at protein level"/>
<name>CNX3_ARATH</name>
<sequence length="270" mass="29513">MISTLRRAVFLRRFPAVVSPIKRAFSSRIDDEFDPQIMNINELNQEMQSIFGQEPSPDGPGTMDFSELKSSKIEPLRSKNIDFRQQIEYHKSTHSSKNDSQAIEQYAKVASDMSKLTHVGIAGEAQMVDVSSKDNSKRTALACCKVILGKRVFDLVLANQMGKGDVLGVAKIAGINGAKQTSSLIPLCHNIALTHVRVDLRLNPEDFSVDIEGEASCTGKTGVEMEAMTAVSVAGLTVYDMCKAASKDISITDVRLERKTGGKSGSWSRL</sequence>
<feature type="transit peptide" description="Mitochondrion" evidence="2">
    <location>
        <begin position="1"/>
        <end position="32"/>
    </location>
</feature>
<feature type="chain" id="PRO_0000097868" description="Cyclic pyranopterin monophosphate synthase, mitochondrial">
    <location>
        <begin position="33"/>
        <end position="270"/>
    </location>
</feature>
<feature type="active site" evidence="2">
    <location>
        <position position="240"/>
    </location>
</feature>
<feature type="binding site" evidence="1">
    <location>
        <begin position="187"/>
        <end position="189"/>
    </location>
    <ligand>
        <name>substrate</name>
    </ligand>
</feature>
<feature type="binding site" evidence="1">
    <location>
        <begin position="225"/>
        <end position="226"/>
    </location>
    <ligand>
        <name>substrate</name>
    </ligand>
</feature>
<evidence type="ECO:0000250" key="1">
    <source>
        <dbReference type="UniProtKB" id="P0A738"/>
    </source>
</evidence>
<evidence type="ECO:0000255" key="2"/>
<evidence type="ECO:0000269" key="3">
    <source>
    </source>
</evidence>
<evidence type="ECO:0000305" key="4"/>
<accession>Q39056</accession>
<accession>Q1ECR4</accession>
<keyword id="KW-0456">Lyase</keyword>
<keyword id="KW-0496">Mitochondrion</keyword>
<keyword id="KW-0501">Molybdenum cofactor biosynthesis</keyword>
<keyword id="KW-1185">Reference proteome</keyword>
<keyword id="KW-0809">Transit peptide</keyword>
<dbReference type="EC" id="4.6.1.17" evidence="1"/>
<dbReference type="EMBL" id="Z48046">
    <property type="protein sequence ID" value="CAA88106.1"/>
    <property type="molecule type" value="mRNA"/>
</dbReference>
<dbReference type="EMBL" id="AC023628">
    <property type="protein sequence ID" value="AAF97327.1"/>
    <property type="molecule type" value="Genomic_DNA"/>
</dbReference>
<dbReference type="EMBL" id="CP002684">
    <property type="protein sequence ID" value="AEE27266.1"/>
    <property type="molecule type" value="Genomic_DNA"/>
</dbReference>
<dbReference type="EMBL" id="CP002684">
    <property type="protein sequence ID" value="AEE27267.1"/>
    <property type="molecule type" value="Genomic_DNA"/>
</dbReference>
<dbReference type="EMBL" id="BT025641">
    <property type="protein sequence ID" value="ABF74702.1"/>
    <property type="molecule type" value="mRNA"/>
</dbReference>
<dbReference type="PIR" id="T46961">
    <property type="entry name" value="T46961"/>
</dbReference>
<dbReference type="RefSeq" id="NP_001154299.1">
    <property type="nucleotide sequence ID" value="NM_001160827.2"/>
</dbReference>
<dbReference type="RefSeq" id="NP_171636.1">
    <property type="nucleotide sequence ID" value="NM_100011.4"/>
</dbReference>
<dbReference type="SMR" id="Q39056"/>
<dbReference type="BioGRID" id="24680">
    <property type="interactions" value="1"/>
</dbReference>
<dbReference type="FunCoup" id="Q39056">
    <property type="interactions" value="356"/>
</dbReference>
<dbReference type="STRING" id="3702.Q39056"/>
<dbReference type="PaxDb" id="3702-AT1G01290.1"/>
<dbReference type="ProteomicsDB" id="241247"/>
<dbReference type="EnsemblPlants" id="AT1G01290.1">
    <property type="protein sequence ID" value="AT1G01290.1"/>
    <property type="gene ID" value="AT1G01290"/>
</dbReference>
<dbReference type="EnsemblPlants" id="AT1G01290.2">
    <property type="protein sequence ID" value="AT1G01290.2"/>
    <property type="gene ID" value="AT1G01290"/>
</dbReference>
<dbReference type="GeneID" id="839445"/>
<dbReference type="Gramene" id="AT1G01290.1">
    <property type="protein sequence ID" value="AT1G01290.1"/>
    <property type="gene ID" value="AT1G01290"/>
</dbReference>
<dbReference type="Gramene" id="AT1G01290.2">
    <property type="protein sequence ID" value="AT1G01290.2"/>
    <property type="gene ID" value="AT1G01290"/>
</dbReference>
<dbReference type="KEGG" id="ath:AT1G01290"/>
<dbReference type="Araport" id="AT1G01290"/>
<dbReference type="TAIR" id="AT1G01290">
    <property type="gene designation" value="CNX3"/>
</dbReference>
<dbReference type="eggNOG" id="KOG2876">
    <property type="taxonomic scope" value="Eukaryota"/>
</dbReference>
<dbReference type="HOGENOM" id="CLU_074693_0_0_1"/>
<dbReference type="InParanoid" id="Q39056"/>
<dbReference type="OMA" id="HIEYQKS"/>
<dbReference type="PhylomeDB" id="Q39056"/>
<dbReference type="BioCyc" id="ARA:AT1G01290-MONOMER"/>
<dbReference type="BioCyc" id="MetaCyc:AT1G01290-MONOMER"/>
<dbReference type="UniPathway" id="UPA00344"/>
<dbReference type="PRO" id="PR:Q39056"/>
<dbReference type="Proteomes" id="UP000006548">
    <property type="component" value="Chromosome 1"/>
</dbReference>
<dbReference type="ExpressionAtlas" id="Q39056">
    <property type="expression patterns" value="baseline and differential"/>
</dbReference>
<dbReference type="GO" id="GO:0009507">
    <property type="term" value="C:chloroplast"/>
    <property type="evidence" value="ECO:0000250"/>
    <property type="project" value="TAIR"/>
</dbReference>
<dbReference type="GO" id="GO:0005759">
    <property type="term" value="C:mitochondrial matrix"/>
    <property type="evidence" value="ECO:0007669"/>
    <property type="project" value="UniProtKB-SubCell"/>
</dbReference>
<dbReference type="GO" id="GO:0005739">
    <property type="term" value="C:mitochondrion"/>
    <property type="evidence" value="ECO:0000314"/>
    <property type="project" value="CACAO"/>
</dbReference>
<dbReference type="GO" id="GO:0061799">
    <property type="term" value="F:cyclic pyranopterin monophosphate synthase activity"/>
    <property type="evidence" value="ECO:0007669"/>
    <property type="project" value="UniProtKB-EC"/>
</dbReference>
<dbReference type="GO" id="GO:0006777">
    <property type="term" value="P:Mo-molybdopterin cofactor biosynthetic process"/>
    <property type="evidence" value="ECO:0007669"/>
    <property type="project" value="UniProtKB-KW"/>
</dbReference>
<dbReference type="CDD" id="cd01420">
    <property type="entry name" value="MoaC_PE"/>
    <property type="match status" value="1"/>
</dbReference>
<dbReference type="FunFam" id="3.30.70.640:FF:000001">
    <property type="entry name" value="Cyclic pyranopterin monophosphate synthase"/>
    <property type="match status" value="1"/>
</dbReference>
<dbReference type="Gene3D" id="3.30.70.640">
    <property type="entry name" value="Molybdopterin cofactor biosynthesis C (MoaC) domain"/>
    <property type="match status" value="1"/>
</dbReference>
<dbReference type="HAMAP" id="MF_01224_B">
    <property type="entry name" value="MoaC_B"/>
    <property type="match status" value="1"/>
</dbReference>
<dbReference type="InterPro" id="IPR023045">
    <property type="entry name" value="MoaC"/>
</dbReference>
<dbReference type="InterPro" id="IPR047594">
    <property type="entry name" value="MoaC_bact/euk"/>
</dbReference>
<dbReference type="InterPro" id="IPR036522">
    <property type="entry name" value="MoaC_sf"/>
</dbReference>
<dbReference type="InterPro" id="IPR050105">
    <property type="entry name" value="MoCo_biosynth_MoaA/MoaC"/>
</dbReference>
<dbReference type="InterPro" id="IPR002820">
    <property type="entry name" value="Mopterin_CF_biosynth-C_dom"/>
</dbReference>
<dbReference type="NCBIfam" id="TIGR00581">
    <property type="entry name" value="moaC"/>
    <property type="match status" value="1"/>
</dbReference>
<dbReference type="NCBIfam" id="NF006870">
    <property type="entry name" value="PRK09364.1"/>
    <property type="match status" value="1"/>
</dbReference>
<dbReference type="PANTHER" id="PTHR22960:SF29">
    <property type="entry name" value="CYCLIC PYRANOPTERIN MONOPHOSPHATE SYNTHASE"/>
    <property type="match status" value="1"/>
</dbReference>
<dbReference type="PANTHER" id="PTHR22960">
    <property type="entry name" value="MOLYBDOPTERIN COFACTOR SYNTHESIS PROTEIN A"/>
    <property type="match status" value="1"/>
</dbReference>
<dbReference type="Pfam" id="PF01967">
    <property type="entry name" value="MoaC"/>
    <property type="match status" value="1"/>
</dbReference>
<dbReference type="SUPFAM" id="SSF55040">
    <property type="entry name" value="Molybdenum cofactor biosynthesis protein C, MoaC"/>
    <property type="match status" value="1"/>
</dbReference>